<gene>
    <name evidence="1" type="primary">aroE</name>
    <name type="ordered locus">Psyc_0139</name>
</gene>
<keyword id="KW-0028">Amino-acid biosynthesis</keyword>
<keyword id="KW-0057">Aromatic amino acid biosynthesis</keyword>
<keyword id="KW-0521">NADP</keyword>
<keyword id="KW-0560">Oxidoreductase</keyword>
<keyword id="KW-1185">Reference proteome</keyword>
<accession>Q4FVE5</accession>
<dbReference type="EC" id="1.1.1.25" evidence="1"/>
<dbReference type="EMBL" id="CP000082">
    <property type="protein sequence ID" value="AAZ18013.1"/>
    <property type="molecule type" value="Genomic_DNA"/>
</dbReference>
<dbReference type="RefSeq" id="WP_011279452.1">
    <property type="nucleotide sequence ID" value="NC_007204.1"/>
</dbReference>
<dbReference type="SMR" id="Q4FVE5"/>
<dbReference type="STRING" id="259536.Psyc_0139"/>
<dbReference type="KEGG" id="par:Psyc_0139"/>
<dbReference type="eggNOG" id="COG0169">
    <property type="taxonomic scope" value="Bacteria"/>
</dbReference>
<dbReference type="HOGENOM" id="CLU_044063_2_1_6"/>
<dbReference type="OrthoDB" id="9776868at2"/>
<dbReference type="UniPathway" id="UPA00053">
    <property type="reaction ID" value="UER00087"/>
</dbReference>
<dbReference type="Proteomes" id="UP000000546">
    <property type="component" value="Chromosome"/>
</dbReference>
<dbReference type="GO" id="GO:0005829">
    <property type="term" value="C:cytosol"/>
    <property type="evidence" value="ECO:0007669"/>
    <property type="project" value="TreeGrafter"/>
</dbReference>
<dbReference type="GO" id="GO:0050661">
    <property type="term" value="F:NADP binding"/>
    <property type="evidence" value="ECO:0007669"/>
    <property type="project" value="InterPro"/>
</dbReference>
<dbReference type="GO" id="GO:0004764">
    <property type="term" value="F:shikimate 3-dehydrogenase (NADP+) activity"/>
    <property type="evidence" value="ECO:0007669"/>
    <property type="project" value="UniProtKB-UniRule"/>
</dbReference>
<dbReference type="GO" id="GO:0008652">
    <property type="term" value="P:amino acid biosynthetic process"/>
    <property type="evidence" value="ECO:0007669"/>
    <property type="project" value="UniProtKB-KW"/>
</dbReference>
<dbReference type="GO" id="GO:0009073">
    <property type="term" value="P:aromatic amino acid family biosynthetic process"/>
    <property type="evidence" value="ECO:0007669"/>
    <property type="project" value="UniProtKB-KW"/>
</dbReference>
<dbReference type="GO" id="GO:0009423">
    <property type="term" value="P:chorismate biosynthetic process"/>
    <property type="evidence" value="ECO:0007669"/>
    <property type="project" value="UniProtKB-UniRule"/>
</dbReference>
<dbReference type="GO" id="GO:0019632">
    <property type="term" value="P:shikimate metabolic process"/>
    <property type="evidence" value="ECO:0007669"/>
    <property type="project" value="InterPro"/>
</dbReference>
<dbReference type="CDD" id="cd01065">
    <property type="entry name" value="NAD_bind_Shikimate_DH"/>
    <property type="match status" value="1"/>
</dbReference>
<dbReference type="Gene3D" id="3.40.50.10860">
    <property type="entry name" value="Leucine Dehydrogenase, chain A, domain 1"/>
    <property type="match status" value="1"/>
</dbReference>
<dbReference type="Gene3D" id="3.40.50.720">
    <property type="entry name" value="NAD(P)-binding Rossmann-like Domain"/>
    <property type="match status" value="1"/>
</dbReference>
<dbReference type="HAMAP" id="MF_00222">
    <property type="entry name" value="Shikimate_DH_AroE"/>
    <property type="match status" value="1"/>
</dbReference>
<dbReference type="InterPro" id="IPR046346">
    <property type="entry name" value="Aminoacid_DH-like_N_sf"/>
</dbReference>
<dbReference type="InterPro" id="IPR036291">
    <property type="entry name" value="NAD(P)-bd_dom_sf"/>
</dbReference>
<dbReference type="InterPro" id="IPR041121">
    <property type="entry name" value="SDH_C"/>
</dbReference>
<dbReference type="InterPro" id="IPR011342">
    <property type="entry name" value="Shikimate_DH"/>
</dbReference>
<dbReference type="InterPro" id="IPR013708">
    <property type="entry name" value="Shikimate_DH-bd_N"/>
</dbReference>
<dbReference type="InterPro" id="IPR022893">
    <property type="entry name" value="Shikimate_DH_fam"/>
</dbReference>
<dbReference type="InterPro" id="IPR006151">
    <property type="entry name" value="Shikm_DH/Glu-tRNA_Rdtase"/>
</dbReference>
<dbReference type="NCBIfam" id="TIGR00507">
    <property type="entry name" value="aroE"/>
    <property type="match status" value="1"/>
</dbReference>
<dbReference type="NCBIfam" id="NF001310">
    <property type="entry name" value="PRK00258.1-2"/>
    <property type="match status" value="1"/>
</dbReference>
<dbReference type="PANTHER" id="PTHR21089:SF1">
    <property type="entry name" value="BIFUNCTIONAL 3-DEHYDROQUINATE DEHYDRATASE_SHIKIMATE DEHYDROGENASE, CHLOROPLASTIC"/>
    <property type="match status" value="1"/>
</dbReference>
<dbReference type="PANTHER" id="PTHR21089">
    <property type="entry name" value="SHIKIMATE DEHYDROGENASE"/>
    <property type="match status" value="1"/>
</dbReference>
<dbReference type="Pfam" id="PF18317">
    <property type="entry name" value="SDH_C"/>
    <property type="match status" value="1"/>
</dbReference>
<dbReference type="Pfam" id="PF01488">
    <property type="entry name" value="Shikimate_DH"/>
    <property type="match status" value="1"/>
</dbReference>
<dbReference type="Pfam" id="PF08501">
    <property type="entry name" value="Shikimate_dh_N"/>
    <property type="match status" value="1"/>
</dbReference>
<dbReference type="SUPFAM" id="SSF53223">
    <property type="entry name" value="Aminoacid dehydrogenase-like, N-terminal domain"/>
    <property type="match status" value="1"/>
</dbReference>
<dbReference type="SUPFAM" id="SSF51735">
    <property type="entry name" value="NAD(P)-binding Rossmann-fold domains"/>
    <property type="match status" value="1"/>
</dbReference>
<feature type="chain" id="PRO_0000325152" description="Shikimate dehydrogenase (NADP(+))">
    <location>
        <begin position="1"/>
        <end position="288"/>
    </location>
</feature>
<feature type="active site" description="Proton acceptor" evidence="1">
    <location>
        <position position="68"/>
    </location>
</feature>
<feature type="binding site" evidence="1">
    <location>
        <begin position="15"/>
        <end position="17"/>
    </location>
    <ligand>
        <name>shikimate</name>
        <dbReference type="ChEBI" id="CHEBI:36208"/>
    </ligand>
</feature>
<feature type="binding site" evidence="1">
    <location>
        <position position="64"/>
    </location>
    <ligand>
        <name>shikimate</name>
        <dbReference type="ChEBI" id="CHEBI:36208"/>
    </ligand>
</feature>
<feature type="binding site" evidence="1">
    <location>
        <position position="83"/>
    </location>
    <ligand>
        <name>NADP(+)</name>
        <dbReference type="ChEBI" id="CHEBI:58349"/>
    </ligand>
</feature>
<feature type="binding site" evidence="1">
    <location>
        <position position="92"/>
    </location>
    <ligand>
        <name>shikimate</name>
        <dbReference type="ChEBI" id="CHEBI:36208"/>
    </ligand>
</feature>
<feature type="binding site" evidence="1">
    <location>
        <position position="117"/>
    </location>
    <ligand>
        <name>shikimate</name>
        <dbReference type="ChEBI" id="CHEBI:36208"/>
    </ligand>
</feature>
<feature type="binding site" evidence="1">
    <location>
        <begin position="141"/>
        <end position="145"/>
    </location>
    <ligand>
        <name>NADP(+)</name>
        <dbReference type="ChEBI" id="CHEBI:58349"/>
    </ligand>
</feature>
<feature type="binding site" evidence="1">
    <location>
        <begin position="165"/>
        <end position="170"/>
    </location>
    <ligand>
        <name>NADP(+)</name>
        <dbReference type="ChEBI" id="CHEBI:58349"/>
    </ligand>
</feature>
<feature type="binding site" evidence="1">
    <location>
        <position position="232"/>
    </location>
    <ligand>
        <name>NADP(+)</name>
        <dbReference type="ChEBI" id="CHEBI:58349"/>
    </ligand>
</feature>
<feature type="binding site" evidence="1">
    <location>
        <position position="234"/>
    </location>
    <ligand>
        <name>shikimate</name>
        <dbReference type="ChEBI" id="CHEBI:36208"/>
    </ligand>
</feature>
<feature type="binding site" evidence="1">
    <location>
        <position position="254"/>
    </location>
    <ligand>
        <name>NADP(+)</name>
        <dbReference type="ChEBI" id="CHEBI:58349"/>
    </ligand>
</feature>
<name>AROE_PSYA2</name>
<organism>
    <name type="scientific">Psychrobacter arcticus (strain DSM 17307 / VKM B-2377 / 273-4)</name>
    <dbReference type="NCBI Taxonomy" id="259536"/>
    <lineage>
        <taxon>Bacteria</taxon>
        <taxon>Pseudomonadati</taxon>
        <taxon>Pseudomonadota</taxon>
        <taxon>Gammaproteobacteria</taxon>
        <taxon>Moraxellales</taxon>
        <taxon>Moraxellaceae</taxon>
        <taxon>Psychrobacter</taxon>
    </lineage>
</organism>
<proteinExistence type="inferred from homology"/>
<reference key="1">
    <citation type="journal article" date="2010" name="Appl. Environ. Microbiol.">
        <title>The genome sequence of Psychrobacter arcticus 273-4, a psychroactive Siberian permafrost bacterium, reveals mechanisms for adaptation to low-temperature growth.</title>
        <authorList>
            <person name="Ayala-del-Rio H.L."/>
            <person name="Chain P.S."/>
            <person name="Grzymski J.J."/>
            <person name="Ponder M.A."/>
            <person name="Ivanova N."/>
            <person name="Bergholz P.W."/>
            <person name="Di Bartolo G."/>
            <person name="Hauser L."/>
            <person name="Land M."/>
            <person name="Bakermans C."/>
            <person name="Rodrigues D."/>
            <person name="Klappenbach J."/>
            <person name="Zarka D."/>
            <person name="Larimer F."/>
            <person name="Richardson P."/>
            <person name="Murray A."/>
            <person name="Thomashow M."/>
            <person name="Tiedje J.M."/>
        </authorList>
    </citation>
    <scope>NUCLEOTIDE SEQUENCE [LARGE SCALE GENOMIC DNA]</scope>
    <source>
        <strain>DSM 17307 / VKM B-2377 / 273-4</strain>
    </source>
</reference>
<sequence>MTQHFIVIGNPIAHSKSPEIHTLFGAHAGLDICYQCQYCPDDPASFTAVIEAFFHGGGVGANVTVPFKQVAYECCAARGGLSEHAKIAGAVNTLSLNQALLASGVSRAEALYGDNTDGQGLVNHMQRLGWPLNGARIAIIGAGGAARGVVLPLIEAGIEALTIANRTLSKATELVNELSTASVVIHNQQIQTCCTADLSGDFDIIVNATSIGLSGETLPLADELNCQYAYDMMYGRELPFLQHFAARGAQTSDGYGMLIGQAALSFECWTGHAIDVTQATAALEKSSI</sequence>
<comment type="function">
    <text evidence="1">Involved in the biosynthesis of the chorismate, which leads to the biosynthesis of aromatic amino acids. Catalyzes the reversible NADPH linked reduction of 3-dehydroshikimate (DHSA) to yield shikimate (SA).</text>
</comment>
<comment type="catalytic activity">
    <reaction evidence="1">
        <text>shikimate + NADP(+) = 3-dehydroshikimate + NADPH + H(+)</text>
        <dbReference type="Rhea" id="RHEA:17737"/>
        <dbReference type="ChEBI" id="CHEBI:15378"/>
        <dbReference type="ChEBI" id="CHEBI:16630"/>
        <dbReference type="ChEBI" id="CHEBI:36208"/>
        <dbReference type="ChEBI" id="CHEBI:57783"/>
        <dbReference type="ChEBI" id="CHEBI:58349"/>
        <dbReference type="EC" id="1.1.1.25"/>
    </reaction>
</comment>
<comment type="pathway">
    <text evidence="1">Metabolic intermediate biosynthesis; chorismate biosynthesis; chorismate from D-erythrose 4-phosphate and phosphoenolpyruvate: step 4/7.</text>
</comment>
<comment type="subunit">
    <text evidence="1">Homodimer.</text>
</comment>
<comment type="similarity">
    <text evidence="1">Belongs to the shikimate dehydrogenase family.</text>
</comment>
<evidence type="ECO:0000255" key="1">
    <source>
        <dbReference type="HAMAP-Rule" id="MF_00222"/>
    </source>
</evidence>
<protein>
    <recommendedName>
        <fullName evidence="1">Shikimate dehydrogenase (NADP(+))</fullName>
        <shortName evidence="1">SDH</shortName>
        <ecNumber evidence="1">1.1.1.25</ecNumber>
    </recommendedName>
</protein>